<gene>
    <name type="primary">NPC2</name>
    <name type="ordered locus">DEHA2C05522g</name>
</gene>
<organism>
    <name type="scientific">Debaryomyces hansenii (strain ATCC 36239 / CBS 767 / BCRC 21394 / JCM 1990 / NBRC 0083 / IGC 2968)</name>
    <name type="common">Yeast</name>
    <name type="synonym">Torulaspora hansenii</name>
    <dbReference type="NCBI Taxonomy" id="284592"/>
    <lineage>
        <taxon>Eukaryota</taxon>
        <taxon>Fungi</taxon>
        <taxon>Dikarya</taxon>
        <taxon>Ascomycota</taxon>
        <taxon>Saccharomycotina</taxon>
        <taxon>Pichiomycetes</taxon>
        <taxon>Debaryomycetaceae</taxon>
        <taxon>Debaryomyces</taxon>
    </lineage>
</organism>
<name>NPC2_DEBHA</name>
<keyword id="KW-0445">Lipid transport</keyword>
<keyword id="KW-1185">Reference proteome</keyword>
<keyword id="KW-0732">Signal</keyword>
<keyword id="KW-0813">Transport</keyword>
<reference key="1">
    <citation type="journal article" date="2004" name="Nature">
        <title>Genome evolution in yeasts.</title>
        <authorList>
            <person name="Dujon B."/>
            <person name="Sherman D."/>
            <person name="Fischer G."/>
            <person name="Durrens P."/>
            <person name="Casaregola S."/>
            <person name="Lafontaine I."/>
            <person name="de Montigny J."/>
            <person name="Marck C."/>
            <person name="Neuveglise C."/>
            <person name="Talla E."/>
            <person name="Goffard N."/>
            <person name="Frangeul L."/>
            <person name="Aigle M."/>
            <person name="Anthouard V."/>
            <person name="Babour A."/>
            <person name="Barbe V."/>
            <person name="Barnay S."/>
            <person name="Blanchin S."/>
            <person name="Beckerich J.-M."/>
            <person name="Beyne E."/>
            <person name="Bleykasten C."/>
            <person name="Boisrame A."/>
            <person name="Boyer J."/>
            <person name="Cattolico L."/>
            <person name="Confanioleri F."/>
            <person name="de Daruvar A."/>
            <person name="Despons L."/>
            <person name="Fabre E."/>
            <person name="Fairhead C."/>
            <person name="Ferry-Dumazet H."/>
            <person name="Groppi A."/>
            <person name="Hantraye F."/>
            <person name="Hennequin C."/>
            <person name="Jauniaux N."/>
            <person name="Joyet P."/>
            <person name="Kachouri R."/>
            <person name="Kerrest A."/>
            <person name="Koszul R."/>
            <person name="Lemaire M."/>
            <person name="Lesur I."/>
            <person name="Ma L."/>
            <person name="Muller H."/>
            <person name="Nicaud J.-M."/>
            <person name="Nikolski M."/>
            <person name="Oztas S."/>
            <person name="Ozier-Kalogeropoulos O."/>
            <person name="Pellenz S."/>
            <person name="Potier S."/>
            <person name="Richard G.-F."/>
            <person name="Straub M.-L."/>
            <person name="Suleau A."/>
            <person name="Swennen D."/>
            <person name="Tekaia F."/>
            <person name="Wesolowski-Louvel M."/>
            <person name="Westhof E."/>
            <person name="Wirth B."/>
            <person name="Zeniou-Meyer M."/>
            <person name="Zivanovic Y."/>
            <person name="Bolotin-Fukuhara M."/>
            <person name="Thierry A."/>
            <person name="Bouchier C."/>
            <person name="Caudron B."/>
            <person name="Scarpelli C."/>
            <person name="Gaillardin C."/>
            <person name="Weissenbach J."/>
            <person name="Wincker P."/>
            <person name="Souciet J.-L."/>
        </authorList>
    </citation>
    <scope>NUCLEOTIDE SEQUENCE [LARGE SCALE GENOMIC DNA]</scope>
    <source>
        <strain>ATCC 36239 / CBS 767 / BCRC 21394 / JCM 1990 / NBRC 0083 / IGC 2968</strain>
    </source>
</reference>
<feature type="signal peptide" evidence="2">
    <location>
        <begin position="1"/>
        <end position="21"/>
    </location>
</feature>
<feature type="propeptide" id="PRO_0000019881" evidence="1">
    <location>
        <begin position="22"/>
        <end position="60"/>
    </location>
</feature>
<feature type="chain" id="PRO_0000019882" description="Phosphatidylglycerol/phosphatidylinositol transfer protein">
    <location>
        <begin position="61"/>
        <end position="196"/>
    </location>
</feature>
<dbReference type="EMBL" id="CR382135">
    <property type="protein sequence ID" value="CAG85981.1"/>
    <property type="molecule type" value="Genomic_DNA"/>
</dbReference>
<dbReference type="RefSeq" id="XP_457927.1">
    <property type="nucleotide sequence ID" value="XM_457927.1"/>
</dbReference>
<dbReference type="SMR" id="Q6BV42"/>
<dbReference type="FunCoup" id="Q6BV42">
    <property type="interactions" value="117"/>
</dbReference>
<dbReference type="STRING" id="284592.Q6BV42"/>
<dbReference type="GeneID" id="2900586"/>
<dbReference type="KEGG" id="dha:DEHA2C05522g"/>
<dbReference type="VEuPathDB" id="FungiDB:DEHA2C05522g"/>
<dbReference type="eggNOG" id="KOG4680">
    <property type="taxonomic scope" value="Eukaryota"/>
</dbReference>
<dbReference type="HOGENOM" id="CLU_097982_0_1_1"/>
<dbReference type="InParanoid" id="Q6BV42"/>
<dbReference type="OMA" id="HQTYDLC"/>
<dbReference type="OrthoDB" id="6409159at2759"/>
<dbReference type="Proteomes" id="UP000000599">
    <property type="component" value="Chromosome C"/>
</dbReference>
<dbReference type="GO" id="GO:0000328">
    <property type="term" value="C:fungal-type vacuole lumen"/>
    <property type="evidence" value="ECO:0007669"/>
    <property type="project" value="EnsemblFungi"/>
</dbReference>
<dbReference type="GO" id="GO:0031210">
    <property type="term" value="F:phosphatidylcholine binding"/>
    <property type="evidence" value="ECO:0007669"/>
    <property type="project" value="EnsemblFungi"/>
</dbReference>
<dbReference type="GO" id="GO:0035091">
    <property type="term" value="F:phosphatidylinositol binding"/>
    <property type="evidence" value="ECO:0007669"/>
    <property type="project" value="EnsemblFungi"/>
</dbReference>
<dbReference type="GO" id="GO:0001786">
    <property type="term" value="F:phosphatidylserine binding"/>
    <property type="evidence" value="ECO:0007669"/>
    <property type="project" value="EnsemblFungi"/>
</dbReference>
<dbReference type="GO" id="GO:0032934">
    <property type="term" value="F:sterol binding"/>
    <property type="evidence" value="ECO:0007669"/>
    <property type="project" value="EnsemblFungi"/>
</dbReference>
<dbReference type="GO" id="GO:0032366">
    <property type="term" value="P:intracellular sterol transport"/>
    <property type="evidence" value="ECO:0007669"/>
    <property type="project" value="EnsemblFungi"/>
</dbReference>
<dbReference type="CDD" id="cd00917">
    <property type="entry name" value="PG-PI_TP"/>
    <property type="match status" value="1"/>
</dbReference>
<dbReference type="FunFam" id="2.60.40.770:FF:000004">
    <property type="entry name" value="Phosphatidylglycerol/phosphatidylinositol transfer protein"/>
    <property type="match status" value="1"/>
</dbReference>
<dbReference type="Gene3D" id="2.60.40.770">
    <property type="match status" value="1"/>
</dbReference>
<dbReference type="InterPro" id="IPR014756">
    <property type="entry name" value="Ig_E-set"/>
</dbReference>
<dbReference type="InterPro" id="IPR003172">
    <property type="entry name" value="ML_dom"/>
</dbReference>
<dbReference type="InterPro" id="IPR033917">
    <property type="entry name" value="ML_PG-PI_TP"/>
</dbReference>
<dbReference type="InterPro" id="IPR039670">
    <property type="entry name" value="NPC2-like"/>
</dbReference>
<dbReference type="PANTHER" id="PTHR11306">
    <property type="entry name" value="NIEMANN PICK TYPE C2 PROTEIN NPC2-RELATED"/>
    <property type="match status" value="1"/>
</dbReference>
<dbReference type="PANTHER" id="PTHR11306:SF0">
    <property type="entry name" value="PHOSPHATIDYLGLYCEROL_PHOSPHATIDYLINOSITOL TRANSFER PROTEIN"/>
    <property type="match status" value="1"/>
</dbReference>
<dbReference type="Pfam" id="PF02221">
    <property type="entry name" value="E1_DerP2_DerF2"/>
    <property type="match status" value="1"/>
</dbReference>
<dbReference type="SMART" id="SM00737">
    <property type="entry name" value="ML"/>
    <property type="match status" value="1"/>
</dbReference>
<dbReference type="SUPFAM" id="SSF81296">
    <property type="entry name" value="E set domains"/>
    <property type="match status" value="1"/>
</dbReference>
<protein>
    <recommendedName>
        <fullName>Phosphatidylglycerol/phosphatidylinositol transfer protein</fullName>
        <shortName>PG/PI-TP</shortName>
    </recommendedName>
</protein>
<evidence type="ECO:0000250" key="1"/>
<evidence type="ECO:0000255" key="2"/>
<evidence type="ECO:0000305" key="3"/>
<sequence>MVAYKNIALLALTFTIASVESLSIVGARPYIDKALSVFDIKTPNSQSEKPEIILTFAGPDDKPVPGDSPIVQCEASVPQLLNLQSVVIDPNPPLRGENLTFVAKGVLSQDIEDGAYVEVDVRYGFIKLLHQTFDLCEEITKIDLECPISKGQQVIEKKVEIPAEVPPGKYIVSARAYTKDDIFITCLSAMVEFPPL</sequence>
<comment type="function">
    <text evidence="1">Catalyzes the intermembrane transfer of phosphatidylglycerol and phosphatidylinositol.</text>
</comment>
<comment type="subunit">
    <text evidence="1">Monomer.</text>
</comment>
<comment type="similarity">
    <text evidence="3">Belongs to the NPC2 family.</text>
</comment>
<proteinExistence type="inferred from homology"/>
<accession>Q6BV42</accession>